<reference key="1">
    <citation type="journal article" date="2003" name="Science">
        <title>Genome of Geobacter sulfurreducens: metal reduction in subsurface environments.</title>
        <authorList>
            <person name="Methe B.A."/>
            <person name="Nelson K.E."/>
            <person name="Eisen J.A."/>
            <person name="Paulsen I.T."/>
            <person name="Nelson W.C."/>
            <person name="Heidelberg J.F."/>
            <person name="Wu D."/>
            <person name="Wu M."/>
            <person name="Ward N.L."/>
            <person name="Beanan M.J."/>
            <person name="Dodson R.J."/>
            <person name="Madupu R."/>
            <person name="Brinkac L.M."/>
            <person name="Daugherty S.C."/>
            <person name="DeBoy R.T."/>
            <person name="Durkin A.S."/>
            <person name="Gwinn M.L."/>
            <person name="Kolonay J.F."/>
            <person name="Sullivan S.A."/>
            <person name="Haft D.H."/>
            <person name="Selengut J."/>
            <person name="Davidsen T.M."/>
            <person name="Zafar N."/>
            <person name="White O."/>
            <person name="Tran B."/>
            <person name="Romero C."/>
            <person name="Forberger H.A."/>
            <person name="Weidman J.F."/>
            <person name="Khouri H.M."/>
            <person name="Feldblyum T.V."/>
            <person name="Utterback T.R."/>
            <person name="Van Aken S.E."/>
            <person name="Lovley D.R."/>
            <person name="Fraser C.M."/>
        </authorList>
    </citation>
    <scope>NUCLEOTIDE SEQUENCE [LARGE SCALE GENOMIC DNA]</scope>
    <source>
        <strain>ATCC 51573 / DSM 12127 / PCA</strain>
    </source>
</reference>
<keyword id="KW-0067">ATP-binding</keyword>
<keyword id="KW-0436">Ligase</keyword>
<keyword id="KW-0547">Nucleotide-binding</keyword>
<keyword id="KW-0648">Protein biosynthesis</keyword>
<keyword id="KW-1185">Reference proteome</keyword>
<organism>
    <name type="scientific">Geobacter sulfurreducens (strain ATCC 51573 / DSM 12127 / PCA)</name>
    <dbReference type="NCBI Taxonomy" id="243231"/>
    <lineage>
        <taxon>Bacteria</taxon>
        <taxon>Pseudomonadati</taxon>
        <taxon>Thermodesulfobacteriota</taxon>
        <taxon>Desulfuromonadia</taxon>
        <taxon>Geobacterales</taxon>
        <taxon>Geobacteraceae</taxon>
        <taxon>Geobacter</taxon>
    </lineage>
</organism>
<proteinExistence type="inferred from homology"/>
<accession>P61343</accession>
<feature type="chain" id="PRO_0000148791" description="Aspartyl/glutamyl-tRNA(Asn/Gln) amidotransferase subunit B">
    <location>
        <begin position="1"/>
        <end position="479"/>
    </location>
</feature>
<gene>
    <name evidence="1" type="primary">gatB</name>
    <name type="ordered locus">GSU3380</name>
</gene>
<comment type="function">
    <text evidence="1">Allows the formation of correctly charged Asn-tRNA(Asn) or Gln-tRNA(Gln) through the transamidation of misacylated Asp-tRNA(Asn) or Glu-tRNA(Gln) in organisms which lack either or both of asparaginyl-tRNA or glutaminyl-tRNA synthetases. The reaction takes place in the presence of glutamine and ATP through an activated phospho-Asp-tRNA(Asn) or phospho-Glu-tRNA(Gln).</text>
</comment>
<comment type="catalytic activity">
    <reaction evidence="1">
        <text>L-glutamyl-tRNA(Gln) + L-glutamine + ATP + H2O = L-glutaminyl-tRNA(Gln) + L-glutamate + ADP + phosphate + H(+)</text>
        <dbReference type="Rhea" id="RHEA:17521"/>
        <dbReference type="Rhea" id="RHEA-COMP:9681"/>
        <dbReference type="Rhea" id="RHEA-COMP:9684"/>
        <dbReference type="ChEBI" id="CHEBI:15377"/>
        <dbReference type="ChEBI" id="CHEBI:15378"/>
        <dbReference type="ChEBI" id="CHEBI:29985"/>
        <dbReference type="ChEBI" id="CHEBI:30616"/>
        <dbReference type="ChEBI" id="CHEBI:43474"/>
        <dbReference type="ChEBI" id="CHEBI:58359"/>
        <dbReference type="ChEBI" id="CHEBI:78520"/>
        <dbReference type="ChEBI" id="CHEBI:78521"/>
        <dbReference type="ChEBI" id="CHEBI:456216"/>
    </reaction>
</comment>
<comment type="catalytic activity">
    <reaction evidence="1">
        <text>L-aspartyl-tRNA(Asn) + L-glutamine + ATP + H2O = L-asparaginyl-tRNA(Asn) + L-glutamate + ADP + phosphate + 2 H(+)</text>
        <dbReference type="Rhea" id="RHEA:14513"/>
        <dbReference type="Rhea" id="RHEA-COMP:9674"/>
        <dbReference type="Rhea" id="RHEA-COMP:9677"/>
        <dbReference type="ChEBI" id="CHEBI:15377"/>
        <dbReference type="ChEBI" id="CHEBI:15378"/>
        <dbReference type="ChEBI" id="CHEBI:29985"/>
        <dbReference type="ChEBI" id="CHEBI:30616"/>
        <dbReference type="ChEBI" id="CHEBI:43474"/>
        <dbReference type="ChEBI" id="CHEBI:58359"/>
        <dbReference type="ChEBI" id="CHEBI:78515"/>
        <dbReference type="ChEBI" id="CHEBI:78516"/>
        <dbReference type="ChEBI" id="CHEBI:456216"/>
    </reaction>
</comment>
<comment type="subunit">
    <text evidence="1">Heterotrimer of A, B and C subunits.</text>
</comment>
<comment type="similarity">
    <text evidence="1">Belongs to the GatB/GatE family. GatB subfamily.</text>
</comment>
<dbReference type="EC" id="6.3.5.-" evidence="1"/>
<dbReference type="EMBL" id="AE017180">
    <property type="protein sequence ID" value="AAR36770.1"/>
    <property type="molecule type" value="Genomic_DNA"/>
</dbReference>
<dbReference type="RefSeq" id="NP_954420.1">
    <property type="nucleotide sequence ID" value="NC_002939.5"/>
</dbReference>
<dbReference type="RefSeq" id="WP_010943991.1">
    <property type="nucleotide sequence ID" value="NC_002939.5"/>
</dbReference>
<dbReference type="SMR" id="P61343"/>
<dbReference type="STRING" id="243231.GSU3380"/>
<dbReference type="EnsemblBacteria" id="AAR36770">
    <property type="protein sequence ID" value="AAR36770"/>
    <property type="gene ID" value="GSU3380"/>
</dbReference>
<dbReference type="KEGG" id="gsu:GSU3380"/>
<dbReference type="PATRIC" id="fig|243231.5.peg.3402"/>
<dbReference type="eggNOG" id="COG0064">
    <property type="taxonomic scope" value="Bacteria"/>
</dbReference>
<dbReference type="HOGENOM" id="CLU_019240_0_0_7"/>
<dbReference type="InParanoid" id="P61343"/>
<dbReference type="OrthoDB" id="9804078at2"/>
<dbReference type="Proteomes" id="UP000000577">
    <property type="component" value="Chromosome"/>
</dbReference>
<dbReference type="GO" id="GO:0050566">
    <property type="term" value="F:asparaginyl-tRNA synthase (glutamine-hydrolyzing) activity"/>
    <property type="evidence" value="ECO:0007669"/>
    <property type="project" value="RHEA"/>
</dbReference>
<dbReference type="GO" id="GO:0005524">
    <property type="term" value="F:ATP binding"/>
    <property type="evidence" value="ECO:0007669"/>
    <property type="project" value="UniProtKB-KW"/>
</dbReference>
<dbReference type="GO" id="GO:0050567">
    <property type="term" value="F:glutaminyl-tRNA synthase (glutamine-hydrolyzing) activity"/>
    <property type="evidence" value="ECO:0000318"/>
    <property type="project" value="GO_Central"/>
</dbReference>
<dbReference type="GO" id="GO:0070681">
    <property type="term" value="P:glutaminyl-tRNAGln biosynthesis via transamidation"/>
    <property type="evidence" value="ECO:0000318"/>
    <property type="project" value="GO_Central"/>
</dbReference>
<dbReference type="GO" id="GO:0006412">
    <property type="term" value="P:translation"/>
    <property type="evidence" value="ECO:0007669"/>
    <property type="project" value="UniProtKB-UniRule"/>
</dbReference>
<dbReference type="FunFam" id="1.10.10.410:FF:000001">
    <property type="entry name" value="Aspartyl/glutamyl-tRNA(Asn/Gln) amidotransferase subunit B"/>
    <property type="match status" value="1"/>
</dbReference>
<dbReference type="FunFam" id="1.10.150.380:FF:000001">
    <property type="entry name" value="Aspartyl/glutamyl-tRNA(Asn/Gln) amidotransferase subunit B"/>
    <property type="match status" value="1"/>
</dbReference>
<dbReference type="Gene3D" id="1.10.10.410">
    <property type="match status" value="1"/>
</dbReference>
<dbReference type="Gene3D" id="1.10.150.380">
    <property type="entry name" value="GatB domain, N-terminal subdomain"/>
    <property type="match status" value="1"/>
</dbReference>
<dbReference type="HAMAP" id="MF_00121">
    <property type="entry name" value="GatB"/>
    <property type="match status" value="1"/>
</dbReference>
<dbReference type="InterPro" id="IPR017959">
    <property type="entry name" value="Asn/Gln-tRNA_amidoTrfase_suB/E"/>
</dbReference>
<dbReference type="InterPro" id="IPR006075">
    <property type="entry name" value="Asn/Gln-tRNA_Trfase_suB/E_cat"/>
</dbReference>
<dbReference type="InterPro" id="IPR018027">
    <property type="entry name" value="Asn/Gln_amidotransferase"/>
</dbReference>
<dbReference type="InterPro" id="IPR003789">
    <property type="entry name" value="Asn/Gln_tRNA_amidoTrase-B-like"/>
</dbReference>
<dbReference type="InterPro" id="IPR004413">
    <property type="entry name" value="GatB"/>
</dbReference>
<dbReference type="InterPro" id="IPR042114">
    <property type="entry name" value="GatB_C_1"/>
</dbReference>
<dbReference type="InterPro" id="IPR023168">
    <property type="entry name" value="GatB_Yqey_C_2"/>
</dbReference>
<dbReference type="InterPro" id="IPR017958">
    <property type="entry name" value="Gln-tRNA_amidoTrfase_suB_CS"/>
</dbReference>
<dbReference type="InterPro" id="IPR014746">
    <property type="entry name" value="Gln_synth/guanido_kin_cat_dom"/>
</dbReference>
<dbReference type="NCBIfam" id="TIGR00133">
    <property type="entry name" value="gatB"/>
    <property type="match status" value="1"/>
</dbReference>
<dbReference type="NCBIfam" id="NF004012">
    <property type="entry name" value="PRK05477.1-2"/>
    <property type="match status" value="1"/>
</dbReference>
<dbReference type="NCBIfam" id="NF004014">
    <property type="entry name" value="PRK05477.1-4"/>
    <property type="match status" value="1"/>
</dbReference>
<dbReference type="NCBIfam" id="NF004015">
    <property type="entry name" value="PRK05477.1-5"/>
    <property type="match status" value="1"/>
</dbReference>
<dbReference type="PANTHER" id="PTHR11659">
    <property type="entry name" value="GLUTAMYL-TRNA GLN AMIDOTRANSFERASE SUBUNIT B MITOCHONDRIAL AND PROKARYOTIC PET112-RELATED"/>
    <property type="match status" value="1"/>
</dbReference>
<dbReference type="PANTHER" id="PTHR11659:SF0">
    <property type="entry name" value="GLUTAMYL-TRNA(GLN) AMIDOTRANSFERASE SUBUNIT B, MITOCHONDRIAL"/>
    <property type="match status" value="1"/>
</dbReference>
<dbReference type="Pfam" id="PF02934">
    <property type="entry name" value="GatB_N"/>
    <property type="match status" value="1"/>
</dbReference>
<dbReference type="Pfam" id="PF02637">
    <property type="entry name" value="GatB_Yqey"/>
    <property type="match status" value="1"/>
</dbReference>
<dbReference type="SMART" id="SM00845">
    <property type="entry name" value="GatB_Yqey"/>
    <property type="match status" value="1"/>
</dbReference>
<dbReference type="SUPFAM" id="SSF89095">
    <property type="entry name" value="GatB/YqeY motif"/>
    <property type="match status" value="1"/>
</dbReference>
<dbReference type="SUPFAM" id="SSF55931">
    <property type="entry name" value="Glutamine synthetase/guanido kinase"/>
    <property type="match status" value="1"/>
</dbReference>
<dbReference type="PROSITE" id="PS01234">
    <property type="entry name" value="GATB"/>
    <property type="match status" value="1"/>
</dbReference>
<protein>
    <recommendedName>
        <fullName evidence="1">Aspartyl/glutamyl-tRNA(Asn/Gln) amidotransferase subunit B</fullName>
        <shortName evidence="1">Asp/Glu-ADT subunit B</shortName>
        <ecNumber evidence="1">6.3.5.-</ecNumber>
    </recommendedName>
</protein>
<name>GATB_GEOSL</name>
<evidence type="ECO:0000255" key="1">
    <source>
        <dbReference type="HAMAP-Rule" id="MF_00121"/>
    </source>
</evidence>
<sequence length="479" mass="52668">MNYQAVIGLEVHVQLKTDTKIFCGCSTTFGASPNSQTCPVCLGMPGVLPVLNKKVVEFAIRAGLATNCRIAPRSVFARKNYFYPDLPKGYQISQYELPICQNGHLDIEVDGQVKRIGITRIHMEEDAGKLVHADVPGLGSGSGVDLNRACTPLLEIVSEPDIRSADEAVAYLRKLHQIVVYLGICDGNMEEGSFRCDANVSVMPVGSTTFGTRTETKNVNSFRFVKQAIEHEIERQIELIEEGGKVVQETRLFDPNTGETRSMRGKEEAHDYRYFPDPDLVPLVISNDWVEDTRLSLPELPDARRSRYRSELGLSDYDAEVLTATREMAEYFENCLAAGAPAKGAANWVMGEVTRALNEAGKDIAECPVAPARLTALLQLIEKGTISGKIAKTVFDEMWQSDKAPEAIVEEKGLVQVSDTGAIEKIIDEIMAANMGQVEEFRGGKEKVFGFFVGQVMRASKGKANPAVVNELLMKKLKG</sequence>